<accession>A8Z6P6</accession>
<gene>
    <name evidence="1" type="primary">ileS</name>
    <name type="ordered locus">Ccon26_16660</name>
    <name type="ORF">CCC13826_0278</name>
</gene>
<keyword id="KW-0030">Aminoacyl-tRNA synthetase</keyword>
<keyword id="KW-0067">ATP-binding</keyword>
<keyword id="KW-0963">Cytoplasm</keyword>
<keyword id="KW-0436">Ligase</keyword>
<keyword id="KW-0479">Metal-binding</keyword>
<keyword id="KW-0547">Nucleotide-binding</keyword>
<keyword id="KW-0648">Protein biosynthesis</keyword>
<keyword id="KW-0862">Zinc</keyword>
<name>SYI_CAMC1</name>
<dbReference type="EC" id="6.1.1.5" evidence="1"/>
<dbReference type="EMBL" id="CP000792">
    <property type="protein sequence ID" value="ABW74825.1"/>
    <property type="molecule type" value="Genomic_DNA"/>
</dbReference>
<dbReference type="RefSeq" id="WP_012140300.1">
    <property type="nucleotide sequence ID" value="NC_009802.2"/>
</dbReference>
<dbReference type="SMR" id="A8Z6P6"/>
<dbReference type="STRING" id="360104.CCC13826_0278"/>
<dbReference type="KEGG" id="cco:CCC13826_0278"/>
<dbReference type="eggNOG" id="COG0060">
    <property type="taxonomic scope" value="Bacteria"/>
</dbReference>
<dbReference type="HOGENOM" id="CLU_001493_7_0_7"/>
<dbReference type="OrthoDB" id="9810365at2"/>
<dbReference type="Proteomes" id="UP000001121">
    <property type="component" value="Chromosome"/>
</dbReference>
<dbReference type="GO" id="GO:0005829">
    <property type="term" value="C:cytosol"/>
    <property type="evidence" value="ECO:0007669"/>
    <property type="project" value="TreeGrafter"/>
</dbReference>
<dbReference type="GO" id="GO:0002161">
    <property type="term" value="F:aminoacyl-tRNA deacylase activity"/>
    <property type="evidence" value="ECO:0007669"/>
    <property type="project" value="InterPro"/>
</dbReference>
<dbReference type="GO" id="GO:0005524">
    <property type="term" value="F:ATP binding"/>
    <property type="evidence" value="ECO:0007669"/>
    <property type="project" value="UniProtKB-UniRule"/>
</dbReference>
<dbReference type="GO" id="GO:0004822">
    <property type="term" value="F:isoleucine-tRNA ligase activity"/>
    <property type="evidence" value="ECO:0007669"/>
    <property type="project" value="UniProtKB-UniRule"/>
</dbReference>
<dbReference type="GO" id="GO:0000049">
    <property type="term" value="F:tRNA binding"/>
    <property type="evidence" value="ECO:0007669"/>
    <property type="project" value="InterPro"/>
</dbReference>
<dbReference type="GO" id="GO:0008270">
    <property type="term" value="F:zinc ion binding"/>
    <property type="evidence" value="ECO:0007669"/>
    <property type="project" value="UniProtKB-UniRule"/>
</dbReference>
<dbReference type="GO" id="GO:0006428">
    <property type="term" value="P:isoleucyl-tRNA aminoacylation"/>
    <property type="evidence" value="ECO:0007669"/>
    <property type="project" value="UniProtKB-UniRule"/>
</dbReference>
<dbReference type="CDD" id="cd07960">
    <property type="entry name" value="Anticodon_Ia_Ile_BEm"/>
    <property type="match status" value="1"/>
</dbReference>
<dbReference type="CDD" id="cd00818">
    <property type="entry name" value="IleRS_core"/>
    <property type="match status" value="1"/>
</dbReference>
<dbReference type="FunFam" id="3.40.50.620:FF:000092">
    <property type="entry name" value="Isoleucine--tRNA ligase"/>
    <property type="match status" value="1"/>
</dbReference>
<dbReference type="Gene3D" id="1.10.730.20">
    <property type="match status" value="1"/>
</dbReference>
<dbReference type="Gene3D" id="3.40.50.620">
    <property type="entry name" value="HUPs"/>
    <property type="match status" value="2"/>
</dbReference>
<dbReference type="Gene3D" id="1.10.10.830">
    <property type="entry name" value="Ile-tRNA synthetase CP2 domain-like"/>
    <property type="match status" value="1"/>
</dbReference>
<dbReference type="Gene3D" id="3.90.740.10">
    <property type="entry name" value="Valyl/Leucyl/Isoleucyl-tRNA synthetase, editing domain"/>
    <property type="match status" value="1"/>
</dbReference>
<dbReference type="HAMAP" id="MF_02002">
    <property type="entry name" value="Ile_tRNA_synth_type1"/>
    <property type="match status" value="1"/>
</dbReference>
<dbReference type="InterPro" id="IPR001412">
    <property type="entry name" value="aa-tRNA-synth_I_CS"/>
</dbReference>
<dbReference type="InterPro" id="IPR002300">
    <property type="entry name" value="aa-tRNA-synth_Ia"/>
</dbReference>
<dbReference type="InterPro" id="IPR033708">
    <property type="entry name" value="Anticodon_Ile_BEm"/>
</dbReference>
<dbReference type="InterPro" id="IPR002301">
    <property type="entry name" value="Ile-tRNA-ligase"/>
</dbReference>
<dbReference type="InterPro" id="IPR023585">
    <property type="entry name" value="Ile-tRNA-ligase_type1"/>
</dbReference>
<dbReference type="InterPro" id="IPR050081">
    <property type="entry name" value="Ile-tRNA_ligase"/>
</dbReference>
<dbReference type="InterPro" id="IPR013155">
    <property type="entry name" value="M/V/L/I-tRNA-synth_anticd-bd"/>
</dbReference>
<dbReference type="InterPro" id="IPR014729">
    <property type="entry name" value="Rossmann-like_a/b/a_fold"/>
</dbReference>
<dbReference type="InterPro" id="IPR009080">
    <property type="entry name" value="tRNAsynth_Ia_anticodon-bd"/>
</dbReference>
<dbReference type="InterPro" id="IPR009008">
    <property type="entry name" value="Val/Leu/Ile-tRNA-synth_edit"/>
</dbReference>
<dbReference type="NCBIfam" id="TIGR00392">
    <property type="entry name" value="ileS"/>
    <property type="match status" value="1"/>
</dbReference>
<dbReference type="PANTHER" id="PTHR42765:SF1">
    <property type="entry name" value="ISOLEUCINE--TRNA LIGASE, MITOCHONDRIAL"/>
    <property type="match status" value="1"/>
</dbReference>
<dbReference type="PANTHER" id="PTHR42765">
    <property type="entry name" value="SOLEUCYL-TRNA SYNTHETASE"/>
    <property type="match status" value="1"/>
</dbReference>
<dbReference type="Pfam" id="PF08264">
    <property type="entry name" value="Anticodon_1"/>
    <property type="match status" value="1"/>
</dbReference>
<dbReference type="Pfam" id="PF00133">
    <property type="entry name" value="tRNA-synt_1"/>
    <property type="match status" value="1"/>
</dbReference>
<dbReference type="PRINTS" id="PR00984">
    <property type="entry name" value="TRNASYNTHILE"/>
</dbReference>
<dbReference type="SUPFAM" id="SSF47323">
    <property type="entry name" value="Anticodon-binding domain of a subclass of class I aminoacyl-tRNA synthetases"/>
    <property type="match status" value="1"/>
</dbReference>
<dbReference type="SUPFAM" id="SSF52374">
    <property type="entry name" value="Nucleotidylyl transferase"/>
    <property type="match status" value="1"/>
</dbReference>
<dbReference type="SUPFAM" id="SSF50677">
    <property type="entry name" value="ValRS/IleRS/LeuRS editing domain"/>
    <property type="match status" value="1"/>
</dbReference>
<dbReference type="PROSITE" id="PS00178">
    <property type="entry name" value="AA_TRNA_LIGASE_I"/>
    <property type="match status" value="1"/>
</dbReference>
<organism>
    <name type="scientific">Campylobacter concisus (strain 13826)</name>
    <dbReference type="NCBI Taxonomy" id="360104"/>
    <lineage>
        <taxon>Bacteria</taxon>
        <taxon>Pseudomonadati</taxon>
        <taxon>Campylobacterota</taxon>
        <taxon>Epsilonproteobacteria</taxon>
        <taxon>Campylobacterales</taxon>
        <taxon>Campylobacteraceae</taxon>
        <taxon>Campylobacter</taxon>
    </lineage>
</organism>
<comment type="function">
    <text evidence="1">Catalyzes the attachment of isoleucine to tRNA(Ile). As IleRS can inadvertently accommodate and process structurally similar amino acids such as valine, to avoid such errors it has two additional distinct tRNA(Ile)-dependent editing activities. One activity is designated as 'pretransfer' editing and involves the hydrolysis of activated Val-AMP. The other activity is designated 'posttransfer' editing and involves deacylation of mischarged Val-tRNA(Ile).</text>
</comment>
<comment type="catalytic activity">
    <reaction evidence="1">
        <text>tRNA(Ile) + L-isoleucine + ATP = L-isoleucyl-tRNA(Ile) + AMP + diphosphate</text>
        <dbReference type="Rhea" id="RHEA:11060"/>
        <dbReference type="Rhea" id="RHEA-COMP:9666"/>
        <dbReference type="Rhea" id="RHEA-COMP:9695"/>
        <dbReference type="ChEBI" id="CHEBI:30616"/>
        <dbReference type="ChEBI" id="CHEBI:33019"/>
        <dbReference type="ChEBI" id="CHEBI:58045"/>
        <dbReference type="ChEBI" id="CHEBI:78442"/>
        <dbReference type="ChEBI" id="CHEBI:78528"/>
        <dbReference type="ChEBI" id="CHEBI:456215"/>
        <dbReference type="EC" id="6.1.1.5"/>
    </reaction>
</comment>
<comment type="cofactor">
    <cofactor evidence="1">
        <name>Zn(2+)</name>
        <dbReference type="ChEBI" id="CHEBI:29105"/>
    </cofactor>
    <text evidence="1">Binds 1 zinc ion per subunit.</text>
</comment>
<comment type="subunit">
    <text evidence="1">Monomer.</text>
</comment>
<comment type="subcellular location">
    <subcellularLocation>
        <location evidence="1">Cytoplasm</location>
    </subcellularLocation>
</comment>
<comment type="domain">
    <text evidence="1">IleRS has two distinct active sites: one for aminoacylation and one for editing. The misactivated valine is translocated from the active site to the editing site, which sterically excludes the correctly activated isoleucine. The single editing site contains two valyl binding pockets, one specific for each substrate (Val-AMP or Val-tRNA(Ile)).</text>
</comment>
<comment type="similarity">
    <text evidence="1">Belongs to the class-I aminoacyl-tRNA synthetase family. IleS type 1 subfamily.</text>
</comment>
<protein>
    <recommendedName>
        <fullName evidence="1">Isoleucine--tRNA ligase</fullName>
        <ecNumber evidence="1">6.1.1.5</ecNumber>
    </recommendedName>
    <alternativeName>
        <fullName evidence="1">Isoleucyl-tRNA synthetase</fullName>
        <shortName evidence="1">IleRS</shortName>
    </alternativeName>
</protein>
<sequence>MDYKETLLLPETNFPMRGNLPQNEPQRLKSWYEERKVYEKMKKNRQNAVKNFNIHDGPPYANGHLHIGHALNKILKDIITKTHYFYGENVRYVPGWDCHGLPIEQQVEVKLGDKKKELSKVEIRELCRQHAREFIDIQRDEFKTLGIIGDFENPYMTMKFEFEADIYKALCEIAKKGLLVERSKPVYWSWAARSALAEAEVEYEEKEDYSIYVAFELDGDALEKLGVKEASAVIWTTTPWTLPANQAISLKPDEIYVLTAENLIFAKPLLESVVQSGLSKGEIKKEFKSSLLENTHAINPLNGRKSKFLLGDHVMMDGGTGLVHTAPGHGEDDYYVCLKYGFSEILMPVDDGGCYDESIKHHGLFRSDVVDEFVGMHIFKANEKILELLGKSLLSVSKFRHSYPFCWRTHKPVIYRATKQWFIAMDESKLGGKTLRQTALKELEKVKFYPSVGIKRIGSMIENRPDWCISRQRDWGVPIAFFRDKATKEVIFDSEILDHIAGIFKEKGADAWWALSIDELLPKGSKYKAENLEKVMDILDVWFDSGSTWHAVLQSDNYDAGKYPASMYLEGSDQHRGWFQSSLLVSTAINSHAPYESILTHGFTVDAKGEKMSKSKGNVIAPQDVAKTHGVEILRLWVGMSDYSSDLKISEDILKQISEQYRKIRNTIRFLLANVNDLESLNTEFNILDKWILARAKKVFDEASACFKNYDFSKGFNILLNFLSADLSGVYLDVCKDRLYCDAKDAPRRRSAQSAMAIITKTLLPLIAPTLTYTVDEVMDYAPKIIKGEAKDAFDLVYEPIKFDLSFEDELLFASREKFNEIVDVLKKDKKIKSTLELSLETTNHNITSYDEREVADLYMVSSVRAYDDSEPLAEFELEGDKFKIIASNLHKCPRCWKFNASKEDALCPRCEEVISAK</sequence>
<evidence type="ECO:0000255" key="1">
    <source>
        <dbReference type="HAMAP-Rule" id="MF_02002"/>
    </source>
</evidence>
<feature type="chain" id="PRO_1000073707" description="Isoleucine--tRNA ligase">
    <location>
        <begin position="1"/>
        <end position="918"/>
    </location>
</feature>
<feature type="short sequence motif" description="'HIGH' region">
    <location>
        <begin position="59"/>
        <end position="69"/>
    </location>
</feature>
<feature type="short sequence motif" description="'KMSKS' region">
    <location>
        <begin position="611"/>
        <end position="615"/>
    </location>
</feature>
<feature type="binding site" evidence="1">
    <location>
        <position position="570"/>
    </location>
    <ligand>
        <name>L-isoleucyl-5'-AMP</name>
        <dbReference type="ChEBI" id="CHEBI:178002"/>
    </ligand>
</feature>
<feature type="binding site" evidence="1">
    <location>
        <position position="614"/>
    </location>
    <ligand>
        <name>ATP</name>
        <dbReference type="ChEBI" id="CHEBI:30616"/>
    </ligand>
</feature>
<feature type="binding site" evidence="1">
    <location>
        <position position="893"/>
    </location>
    <ligand>
        <name>Zn(2+)</name>
        <dbReference type="ChEBI" id="CHEBI:29105"/>
    </ligand>
</feature>
<feature type="binding site" evidence="1">
    <location>
        <position position="896"/>
    </location>
    <ligand>
        <name>Zn(2+)</name>
        <dbReference type="ChEBI" id="CHEBI:29105"/>
    </ligand>
</feature>
<feature type="binding site" evidence="1">
    <location>
        <position position="908"/>
    </location>
    <ligand>
        <name>Zn(2+)</name>
        <dbReference type="ChEBI" id="CHEBI:29105"/>
    </ligand>
</feature>
<feature type="binding site" evidence="1">
    <location>
        <position position="911"/>
    </location>
    <ligand>
        <name>Zn(2+)</name>
        <dbReference type="ChEBI" id="CHEBI:29105"/>
    </ligand>
</feature>
<reference key="1">
    <citation type="submission" date="2007-10" db="EMBL/GenBank/DDBJ databases">
        <title>Genome sequence of Campylobacter concisus 13826 isolated from human feces.</title>
        <authorList>
            <person name="Fouts D.E."/>
            <person name="Mongodin E.F."/>
            <person name="Puiu D."/>
            <person name="Sebastian Y."/>
            <person name="Miller W.G."/>
            <person name="Mandrell R.E."/>
            <person name="On S."/>
            <person name="Nelson K.E."/>
        </authorList>
    </citation>
    <scope>NUCLEOTIDE SEQUENCE [LARGE SCALE GENOMIC DNA]</scope>
    <source>
        <strain>13826</strain>
    </source>
</reference>
<proteinExistence type="inferred from homology"/>